<organism>
    <name type="scientific">Aspergillus niger (strain ATCC MYA-4892 / CBS 513.88 / FGSC A1513)</name>
    <dbReference type="NCBI Taxonomy" id="425011"/>
    <lineage>
        <taxon>Eukaryota</taxon>
        <taxon>Fungi</taxon>
        <taxon>Dikarya</taxon>
        <taxon>Ascomycota</taxon>
        <taxon>Pezizomycotina</taxon>
        <taxon>Eurotiomycetes</taxon>
        <taxon>Eurotiomycetidae</taxon>
        <taxon>Eurotiales</taxon>
        <taxon>Aspergillaceae</taxon>
        <taxon>Aspergillus</taxon>
        <taxon>Aspergillus subgen. Circumdati</taxon>
    </lineage>
</organism>
<protein>
    <recommendedName>
        <fullName>Probable feruloyl esterase A</fullName>
        <ecNumber>3.1.1.73</ecNumber>
    </recommendedName>
    <alternativeName>
        <fullName>Ferulic acid esterase A</fullName>
    </alternativeName>
</protein>
<keyword id="KW-0119">Carbohydrate metabolism</keyword>
<keyword id="KW-1015">Disulfide bond</keyword>
<keyword id="KW-0325">Glycoprotein</keyword>
<keyword id="KW-0378">Hydrolase</keyword>
<keyword id="KW-0624">Polysaccharide degradation</keyword>
<keyword id="KW-1185">Reference proteome</keyword>
<keyword id="KW-0964">Secreted</keyword>
<keyword id="KW-0719">Serine esterase</keyword>
<keyword id="KW-0732">Signal</keyword>
<keyword id="KW-0858">Xylan degradation</keyword>
<proteinExistence type="inferred from homology"/>
<name>FAEA_ASPNC</name>
<feature type="signal peptide" evidence="3">
    <location>
        <begin position="1"/>
        <end position="21"/>
    </location>
</feature>
<feature type="chain" id="PRO_5000220371" description="Probable feruloyl esterase A">
    <location>
        <begin position="22"/>
        <end position="281"/>
    </location>
</feature>
<feature type="active site" description="Nucleophile" evidence="2">
    <location>
        <position position="154"/>
    </location>
</feature>
<feature type="active site" description="Charge relay system" evidence="2">
    <location>
        <position position="215"/>
    </location>
</feature>
<feature type="active site" description="Charge relay system" evidence="2">
    <location>
        <position position="268"/>
    </location>
</feature>
<feature type="binding site" evidence="2">
    <location>
        <position position="98"/>
    </location>
    <ligand>
        <name>substrate</name>
    </ligand>
</feature>
<feature type="binding site" evidence="2">
    <location>
        <position position="101"/>
    </location>
    <ligand>
        <name>substrate</name>
    </ligand>
</feature>
<feature type="binding site" evidence="2">
    <location>
        <position position="268"/>
    </location>
    <ligand>
        <name>substrate</name>
    </ligand>
</feature>
<feature type="glycosylation site" description="N-linked (GlcNAc...) asparagine" evidence="3">
    <location>
        <position position="100"/>
    </location>
</feature>
<feature type="disulfide bond" evidence="2">
    <location>
        <begin position="50"/>
        <end position="279"/>
    </location>
</feature>
<feature type="disulfide bond" evidence="2">
    <location>
        <begin position="112"/>
        <end position="115"/>
    </location>
</feature>
<feature type="disulfide bond" evidence="2">
    <location>
        <begin position="248"/>
        <end position="255"/>
    </location>
</feature>
<evidence type="ECO:0000250" key="1"/>
<evidence type="ECO:0000250" key="2">
    <source>
        <dbReference type="UniProtKB" id="O42807"/>
    </source>
</evidence>
<evidence type="ECO:0000255" key="3"/>
<evidence type="ECO:0000305" key="4"/>
<accession>A2QSY5</accession>
<reference key="1">
    <citation type="journal article" date="2007" name="Nat. Biotechnol.">
        <title>Genome sequencing and analysis of the versatile cell factory Aspergillus niger CBS 513.88.</title>
        <authorList>
            <person name="Pel H.J."/>
            <person name="de Winde J.H."/>
            <person name="Archer D.B."/>
            <person name="Dyer P.S."/>
            <person name="Hofmann G."/>
            <person name="Schaap P.J."/>
            <person name="Turner G."/>
            <person name="de Vries R.P."/>
            <person name="Albang R."/>
            <person name="Albermann K."/>
            <person name="Andersen M.R."/>
            <person name="Bendtsen J.D."/>
            <person name="Benen J.A.E."/>
            <person name="van den Berg M."/>
            <person name="Breestraat S."/>
            <person name="Caddick M.X."/>
            <person name="Contreras R."/>
            <person name="Cornell M."/>
            <person name="Coutinho P.M."/>
            <person name="Danchin E.G.J."/>
            <person name="Debets A.J.M."/>
            <person name="Dekker P."/>
            <person name="van Dijck P.W.M."/>
            <person name="van Dijk A."/>
            <person name="Dijkhuizen L."/>
            <person name="Driessen A.J.M."/>
            <person name="d'Enfert C."/>
            <person name="Geysens S."/>
            <person name="Goosen C."/>
            <person name="Groot G.S.P."/>
            <person name="de Groot P.W.J."/>
            <person name="Guillemette T."/>
            <person name="Henrissat B."/>
            <person name="Herweijer M."/>
            <person name="van den Hombergh J.P.T.W."/>
            <person name="van den Hondel C.A.M.J.J."/>
            <person name="van der Heijden R.T.J.M."/>
            <person name="van der Kaaij R.M."/>
            <person name="Klis F.M."/>
            <person name="Kools H.J."/>
            <person name="Kubicek C.P."/>
            <person name="van Kuyk P.A."/>
            <person name="Lauber J."/>
            <person name="Lu X."/>
            <person name="van der Maarel M.J.E.C."/>
            <person name="Meulenberg R."/>
            <person name="Menke H."/>
            <person name="Mortimer M.A."/>
            <person name="Nielsen J."/>
            <person name="Oliver S.G."/>
            <person name="Olsthoorn M."/>
            <person name="Pal K."/>
            <person name="van Peij N.N.M.E."/>
            <person name="Ram A.F.J."/>
            <person name="Rinas U."/>
            <person name="Roubos J.A."/>
            <person name="Sagt C.M.J."/>
            <person name="Schmoll M."/>
            <person name="Sun J."/>
            <person name="Ussery D."/>
            <person name="Varga J."/>
            <person name="Vervecken W."/>
            <person name="van de Vondervoort P.J.J."/>
            <person name="Wedler H."/>
            <person name="Woesten H.A.B."/>
            <person name="Zeng A.-P."/>
            <person name="van Ooyen A.J.J."/>
            <person name="Visser J."/>
            <person name="Stam H."/>
        </authorList>
    </citation>
    <scope>NUCLEOTIDE SEQUENCE [LARGE SCALE GENOMIC DNA]</scope>
    <source>
        <strain>ATCC MYA-4892 / CBS 513.88 / FGSC A1513</strain>
    </source>
</reference>
<dbReference type="EC" id="3.1.1.73"/>
<dbReference type="EMBL" id="AM270190">
    <property type="protein sequence ID" value="CAK45846.1"/>
    <property type="molecule type" value="Genomic_DNA"/>
</dbReference>
<dbReference type="RefSeq" id="XP_001393337.1">
    <property type="nucleotide sequence ID" value="XM_001393300.2"/>
</dbReference>
<dbReference type="SMR" id="A2QSY5"/>
<dbReference type="ESTHER" id="aspni-FAEA">
    <property type="family name" value="Lipase_3"/>
</dbReference>
<dbReference type="GlyCosmos" id="A2QSY5">
    <property type="glycosylation" value="1 site, No reported glycans"/>
</dbReference>
<dbReference type="EnsemblFungi" id="CAK45846">
    <property type="protein sequence ID" value="CAK45846"/>
    <property type="gene ID" value="An09g00120"/>
</dbReference>
<dbReference type="GeneID" id="4983573"/>
<dbReference type="KEGG" id="ang:An09g00120"/>
<dbReference type="VEuPathDB" id="FungiDB:An09g00120"/>
<dbReference type="HOGENOM" id="CLU_032957_1_1_1"/>
<dbReference type="Proteomes" id="UP000006706">
    <property type="component" value="Chromosome 1L"/>
</dbReference>
<dbReference type="GO" id="GO:0005576">
    <property type="term" value="C:extracellular region"/>
    <property type="evidence" value="ECO:0007669"/>
    <property type="project" value="UniProtKB-SubCell"/>
</dbReference>
<dbReference type="GO" id="GO:0030600">
    <property type="term" value="F:feruloyl esterase activity"/>
    <property type="evidence" value="ECO:0000314"/>
    <property type="project" value="AspGD"/>
</dbReference>
<dbReference type="GO" id="GO:0016788">
    <property type="term" value="F:hydrolase activity, acting on ester bonds"/>
    <property type="evidence" value="ECO:0000314"/>
    <property type="project" value="AspGD"/>
</dbReference>
<dbReference type="GO" id="GO:0044347">
    <property type="term" value="P:cell wall polysaccharide catabolic process"/>
    <property type="evidence" value="ECO:0000314"/>
    <property type="project" value="AspGD"/>
</dbReference>
<dbReference type="GO" id="GO:0006629">
    <property type="term" value="P:lipid metabolic process"/>
    <property type="evidence" value="ECO:0007669"/>
    <property type="project" value="InterPro"/>
</dbReference>
<dbReference type="GO" id="GO:0000272">
    <property type="term" value="P:polysaccharide catabolic process"/>
    <property type="evidence" value="ECO:0000314"/>
    <property type="project" value="AspGD"/>
</dbReference>
<dbReference type="GO" id="GO:0045493">
    <property type="term" value="P:xylan catabolic process"/>
    <property type="evidence" value="ECO:0007669"/>
    <property type="project" value="UniProtKB-KW"/>
</dbReference>
<dbReference type="CDD" id="cd00519">
    <property type="entry name" value="Lipase_3"/>
    <property type="match status" value="1"/>
</dbReference>
<dbReference type="FunFam" id="3.40.50.1820:FF:000260">
    <property type="entry name" value="Feruloyl esterase A"/>
    <property type="match status" value="1"/>
</dbReference>
<dbReference type="Gene3D" id="3.40.50.1820">
    <property type="entry name" value="alpha/beta hydrolase"/>
    <property type="match status" value="1"/>
</dbReference>
<dbReference type="InterPro" id="IPR029058">
    <property type="entry name" value="AB_hydrolase_fold"/>
</dbReference>
<dbReference type="InterPro" id="IPR051299">
    <property type="entry name" value="AB_hydrolase_lip/est"/>
</dbReference>
<dbReference type="InterPro" id="IPR002921">
    <property type="entry name" value="Fungal_lipase-type"/>
</dbReference>
<dbReference type="PANTHER" id="PTHR46640:SF1">
    <property type="entry name" value="FUNGAL LIPASE-LIKE DOMAIN-CONTAINING PROTEIN-RELATED"/>
    <property type="match status" value="1"/>
</dbReference>
<dbReference type="PANTHER" id="PTHR46640">
    <property type="entry name" value="TRIACYLGLYCEROL LIPASE, PUTATIVE (AFU_ORTHOLOGUE AFUA_6G06510)-RELATED"/>
    <property type="match status" value="1"/>
</dbReference>
<dbReference type="Pfam" id="PF01764">
    <property type="entry name" value="Lipase_3"/>
    <property type="match status" value="1"/>
</dbReference>
<dbReference type="SUPFAM" id="SSF53474">
    <property type="entry name" value="alpha/beta-Hydrolases"/>
    <property type="match status" value="1"/>
</dbReference>
<dbReference type="PROSITE" id="PS00120">
    <property type="entry name" value="LIPASE_SER"/>
    <property type="match status" value="1"/>
</dbReference>
<sequence>MKQFSAKYALILLATAGQALAASTQGISEDLYNRLVEMATISQAAYADLCNIPSTIIKGEKIYNAQTDINGWILRDDTSKEIITVFRGTGSDTNLQLDTNYTLTPFDTLPQCNDCEVHGGYYIGWISVQDQVESLVKQQASQYPDYALTVTGHSLGASMAALTAAQLSATYDNVRLYTFGEPRSGNQAFASYMNDAFQVSSPETTQYFRVTHSNDGIPNLPPAEQGYAHGGVEYWSVDPYSAQNTFVCTGDEVQCCEAQGGQGVNDAHTTYFGMTSGACTW</sequence>
<gene>
    <name type="primary">faeA</name>
    <name type="ORF">An09g00120</name>
</gene>
<comment type="function">
    <text evidence="1">Involved in degradation of plant cell walls. Hydrolyzes the feruloyl-arabinose ester bond in arabinoxylans, and the feruloyl-galactose ester bond in pectin (By similarity).</text>
</comment>
<comment type="catalytic activity">
    <reaction>
        <text>feruloyl-polysaccharide + H2O = ferulate + polysaccharide.</text>
        <dbReference type="EC" id="3.1.1.73"/>
    </reaction>
</comment>
<comment type="subcellular location">
    <subcellularLocation>
        <location evidence="1">Secreted</location>
    </subcellularLocation>
</comment>
<comment type="similarity">
    <text evidence="4">Belongs to the AB hydrolase superfamily. FaeA family.</text>
</comment>